<proteinExistence type="inferred from homology"/>
<sequence>MQEKAVVLDDQMIRRALTRISHEIVERNKGVDNCVLVGIKTRGIFIAQRLAERIGQIEGKEMEVGELDITLYRDDLTLQSKNKEPLVKGSDIPVDITKKKVILVDDVLYTGRTVRAAMDALMDLGRPSQIQLAVLVDRGHRELPIRADYVGKNIPTSSEERIEVDLQETDQQDRVSIYDK</sequence>
<keyword id="KW-0328">Glycosyltransferase</keyword>
<keyword id="KW-0694">RNA-binding</keyword>
<keyword id="KW-0804">Transcription</keyword>
<keyword id="KW-0805">Transcription regulation</keyword>
<keyword id="KW-0806">Transcription termination</keyword>
<keyword id="KW-0808">Transferase</keyword>
<protein>
    <recommendedName>
        <fullName evidence="1">Bifunctional protein PyrR</fullName>
    </recommendedName>
    <domain>
        <recommendedName>
            <fullName evidence="1">Pyrimidine operon regulatory protein</fullName>
        </recommendedName>
    </domain>
    <domain>
        <recommendedName>
            <fullName evidence="1">Uracil phosphoribosyltransferase</fullName>
            <shortName evidence="1">UPRTase</shortName>
            <ecNumber evidence="1">2.4.2.9</ecNumber>
        </recommendedName>
    </domain>
</protein>
<evidence type="ECO:0000255" key="1">
    <source>
        <dbReference type="HAMAP-Rule" id="MF_01219"/>
    </source>
</evidence>
<organism>
    <name type="scientific">Bacillus cereus (strain ZK / E33L)</name>
    <dbReference type="NCBI Taxonomy" id="288681"/>
    <lineage>
        <taxon>Bacteria</taxon>
        <taxon>Bacillati</taxon>
        <taxon>Bacillota</taxon>
        <taxon>Bacilli</taxon>
        <taxon>Bacillales</taxon>
        <taxon>Bacillaceae</taxon>
        <taxon>Bacillus</taxon>
        <taxon>Bacillus cereus group</taxon>
    </lineage>
</organism>
<accession>Q636D5</accession>
<gene>
    <name evidence="1" type="primary">pyrR</name>
    <name type="ordered locus">BCE33L3650</name>
</gene>
<feature type="chain" id="PRO_1000053824" description="Bifunctional protein PyrR">
    <location>
        <begin position="1"/>
        <end position="180"/>
    </location>
</feature>
<feature type="short sequence motif" description="PRPP-binding" evidence="1">
    <location>
        <begin position="101"/>
        <end position="113"/>
    </location>
</feature>
<reference key="1">
    <citation type="journal article" date="2006" name="J. Bacteriol.">
        <title>Pathogenomic sequence analysis of Bacillus cereus and Bacillus thuringiensis isolates closely related to Bacillus anthracis.</title>
        <authorList>
            <person name="Han C.S."/>
            <person name="Xie G."/>
            <person name="Challacombe J.F."/>
            <person name="Altherr M.R."/>
            <person name="Bhotika S.S."/>
            <person name="Bruce D."/>
            <person name="Campbell C.S."/>
            <person name="Campbell M.L."/>
            <person name="Chen J."/>
            <person name="Chertkov O."/>
            <person name="Cleland C."/>
            <person name="Dimitrijevic M."/>
            <person name="Doggett N.A."/>
            <person name="Fawcett J.J."/>
            <person name="Glavina T."/>
            <person name="Goodwin L.A."/>
            <person name="Hill K.K."/>
            <person name="Hitchcock P."/>
            <person name="Jackson P.J."/>
            <person name="Keim P."/>
            <person name="Kewalramani A.R."/>
            <person name="Longmire J."/>
            <person name="Lucas S."/>
            <person name="Malfatti S."/>
            <person name="McMurry K."/>
            <person name="Meincke L.J."/>
            <person name="Misra M."/>
            <person name="Moseman B.L."/>
            <person name="Mundt M."/>
            <person name="Munk A.C."/>
            <person name="Okinaka R.T."/>
            <person name="Parson-Quintana B."/>
            <person name="Reilly L.P."/>
            <person name="Richardson P."/>
            <person name="Robinson D.L."/>
            <person name="Rubin E."/>
            <person name="Saunders E."/>
            <person name="Tapia R."/>
            <person name="Tesmer J.G."/>
            <person name="Thayer N."/>
            <person name="Thompson L.S."/>
            <person name="Tice H."/>
            <person name="Ticknor L.O."/>
            <person name="Wills P.L."/>
            <person name="Brettin T.S."/>
            <person name="Gilna P."/>
        </authorList>
    </citation>
    <scope>NUCLEOTIDE SEQUENCE [LARGE SCALE GENOMIC DNA]</scope>
    <source>
        <strain>ZK / E33L</strain>
    </source>
</reference>
<comment type="function">
    <text evidence="1">Regulates transcriptional attenuation of the pyrimidine nucleotide (pyr) operon by binding in a uridine-dependent manner to specific sites on pyr mRNA. This disrupts an antiterminator hairpin in the RNA and favors formation of a downstream transcription terminator, leading to a reduced expression of downstream genes.</text>
</comment>
<comment type="function">
    <text evidence="1">Also displays a weak uracil phosphoribosyltransferase activity which is not physiologically significant.</text>
</comment>
<comment type="catalytic activity">
    <reaction evidence="1">
        <text>UMP + diphosphate = 5-phospho-alpha-D-ribose 1-diphosphate + uracil</text>
        <dbReference type="Rhea" id="RHEA:13017"/>
        <dbReference type="ChEBI" id="CHEBI:17568"/>
        <dbReference type="ChEBI" id="CHEBI:33019"/>
        <dbReference type="ChEBI" id="CHEBI:57865"/>
        <dbReference type="ChEBI" id="CHEBI:58017"/>
        <dbReference type="EC" id="2.4.2.9"/>
    </reaction>
</comment>
<comment type="subunit">
    <text evidence="1">Homodimer and homohexamer; in equilibrium.</text>
</comment>
<comment type="similarity">
    <text evidence="1">Belongs to the purine/pyrimidine phosphoribosyltransferase family. PyrR subfamily.</text>
</comment>
<dbReference type="EC" id="2.4.2.9" evidence="1"/>
<dbReference type="EMBL" id="CP000001">
    <property type="protein sequence ID" value="AAU16616.1"/>
    <property type="molecule type" value="Genomic_DNA"/>
</dbReference>
<dbReference type="RefSeq" id="WP_001156491.1">
    <property type="nucleotide sequence ID" value="NZ_CP009968.1"/>
</dbReference>
<dbReference type="SMR" id="Q636D5"/>
<dbReference type="GeneID" id="75087028"/>
<dbReference type="KEGG" id="bcz:BCE33L3650"/>
<dbReference type="PATRIC" id="fig|288681.22.peg.1761"/>
<dbReference type="Proteomes" id="UP000002612">
    <property type="component" value="Chromosome"/>
</dbReference>
<dbReference type="GO" id="GO:0003723">
    <property type="term" value="F:RNA binding"/>
    <property type="evidence" value="ECO:0007669"/>
    <property type="project" value="UniProtKB-UniRule"/>
</dbReference>
<dbReference type="GO" id="GO:0004845">
    <property type="term" value="F:uracil phosphoribosyltransferase activity"/>
    <property type="evidence" value="ECO:0007669"/>
    <property type="project" value="UniProtKB-UniRule"/>
</dbReference>
<dbReference type="GO" id="GO:0006353">
    <property type="term" value="P:DNA-templated transcription termination"/>
    <property type="evidence" value="ECO:0007669"/>
    <property type="project" value="UniProtKB-UniRule"/>
</dbReference>
<dbReference type="CDD" id="cd06223">
    <property type="entry name" value="PRTases_typeI"/>
    <property type="match status" value="1"/>
</dbReference>
<dbReference type="FunFam" id="3.40.50.2020:FF:000020">
    <property type="entry name" value="Bifunctional protein PyrR"/>
    <property type="match status" value="1"/>
</dbReference>
<dbReference type="Gene3D" id="3.40.50.2020">
    <property type="match status" value="1"/>
</dbReference>
<dbReference type="HAMAP" id="MF_01219">
    <property type="entry name" value="PyrR"/>
    <property type="match status" value="1"/>
</dbReference>
<dbReference type="InterPro" id="IPR000836">
    <property type="entry name" value="PRibTrfase_dom"/>
</dbReference>
<dbReference type="InterPro" id="IPR029057">
    <property type="entry name" value="PRTase-like"/>
</dbReference>
<dbReference type="InterPro" id="IPR023050">
    <property type="entry name" value="PyrR"/>
</dbReference>
<dbReference type="InterPro" id="IPR050137">
    <property type="entry name" value="PyrR_bifunctional"/>
</dbReference>
<dbReference type="NCBIfam" id="NF003545">
    <property type="entry name" value="PRK05205.1-1"/>
    <property type="match status" value="1"/>
</dbReference>
<dbReference type="NCBIfam" id="NF003547">
    <property type="entry name" value="PRK05205.1-3"/>
    <property type="match status" value="1"/>
</dbReference>
<dbReference type="NCBIfam" id="NF003548">
    <property type="entry name" value="PRK05205.1-4"/>
    <property type="match status" value="1"/>
</dbReference>
<dbReference type="NCBIfam" id="NF003549">
    <property type="entry name" value="PRK05205.1-5"/>
    <property type="match status" value="1"/>
</dbReference>
<dbReference type="PANTHER" id="PTHR11608">
    <property type="entry name" value="BIFUNCTIONAL PROTEIN PYRR"/>
    <property type="match status" value="1"/>
</dbReference>
<dbReference type="PANTHER" id="PTHR11608:SF0">
    <property type="entry name" value="BIFUNCTIONAL PROTEIN PYRR"/>
    <property type="match status" value="1"/>
</dbReference>
<dbReference type="Pfam" id="PF00156">
    <property type="entry name" value="Pribosyltran"/>
    <property type="match status" value="1"/>
</dbReference>
<dbReference type="SUPFAM" id="SSF53271">
    <property type="entry name" value="PRTase-like"/>
    <property type="match status" value="1"/>
</dbReference>
<name>PYRR_BACCZ</name>